<gene>
    <name evidence="3" type="primary">aunD</name>
    <name type="ORF">An01g15010</name>
</gene>
<reference key="1">
    <citation type="journal article" date="2007" name="Nat. Biotechnol.">
        <title>Genome sequencing and analysis of the versatile cell factory Aspergillus niger CBS 513.88.</title>
        <authorList>
            <person name="Pel H.J."/>
            <person name="de Winde J.H."/>
            <person name="Archer D.B."/>
            <person name="Dyer P.S."/>
            <person name="Hofmann G."/>
            <person name="Schaap P.J."/>
            <person name="Turner G."/>
            <person name="de Vries R.P."/>
            <person name="Albang R."/>
            <person name="Albermann K."/>
            <person name="Andersen M.R."/>
            <person name="Bendtsen J.D."/>
            <person name="Benen J.A.E."/>
            <person name="van den Berg M."/>
            <person name="Breestraat S."/>
            <person name="Caddick M.X."/>
            <person name="Contreras R."/>
            <person name="Cornell M."/>
            <person name="Coutinho P.M."/>
            <person name="Danchin E.G.J."/>
            <person name="Debets A.J.M."/>
            <person name="Dekker P."/>
            <person name="van Dijck P.W.M."/>
            <person name="van Dijk A."/>
            <person name="Dijkhuizen L."/>
            <person name="Driessen A.J.M."/>
            <person name="d'Enfert C."/>
            <person name="Geysens S."/>
            <person name="Goosen C."/>
            <person name="Groot G.S.P."/>
            <person name="de Groot P.W.J."/>
            <person name="Guillemette T."/>
            <person name="Henrissat B."/>
            <person name="Herweijer M."/>
            <person name="van den Hombergh J.P.T.W."/>
            <person name="van den Hondel C.A.M.J.J."/>
            <person name="van der Heijden R.T.J.M."/>
            <person name="van der Kaaij R.M."/>
            <person name="Klis F.M."/>
            <person name="Kools H.J."/>
            <person name="Kubicek C.P."/>
            <person name="van Kuyk P.A."/>
            <person name="Lauber J."/>
            <person name="Lu X."/>
            <person name="van der Maarel M.J.E.C."/>
            <person name="Meulenberg R."/>
            <person name="Menke H."/>
            <person name="Mortimer M.A."/>
            <person name="Nielsen J."/>
            <person name="Oliver S.G."/>
            <person name="Olsthoorn M."/>
            <person name="Pal K."/>
            <person name="van Peij N.N.M.E."/>
            <person name="Ram A.F.J."/>
            <person name="Rinas U."/>
            <person name="Roubos J.A."/>
            <person name="Sagt C.M.J."/>
            <person name="Schmoll M."/>
            <person name="Sun J."/>
            <person name="Ussery D."/>
            <person name="Varga J."/>
            <person name="Vervecken W."/>
            <person name="van de Vondervoort P.J.J."/>
            <person name="Wedler H."/>
            <person name="Woesten H.A.B."/>
            <person name="Zeng A.-P."/>
            <person name="van Ooyen A.J.J."/>
            <person name="Visser J."/>
            <person name="Stam H."/>
        </authorList>
    </citation>
    <scope>NUCLEOTIDE SEQUENCE [LARGE SCALE GENOMIC DNA]</scope>
    <source>
        <strain>ATCC MYA-4892 / CBS 513.88 / FGSC A1513</strain>
    </source>
</reference>
<reference key="2">
    <citation type="journal article" date="2019" name="Biochemistry">
        <title>Biaryl-forming enzymes from Aspergilli exhibit substrate-dependent stereoselectivity.</title>
        <authorList>
            <person name="Obermaier S."/>
            <person name="Mueller M."/>
        </authorList>
    </citation>
    <scope>FUNCTION</scope>
    <scope>DISRUPTION PHENOTYPE</scope>
    <scope>PATHWAY</scope>
</reference>
<dbReference type="EC" id="2.1.1.-" evidence="5"/>
<dbReference type="EMBL" id="AM269994">
    <property type="protein sequence ID" value="CAK37455.1"/>
    <property type="status" value="ALT_SEQ"/>
    <property type="molecule type" value="Genomic_DNA"/>
</dbReference>
<dbReference type="RefSeq" id="XP_001389889.2">
    <property type="nucleotide sequence ID" value="XM_001389852.2"/>
</dbReference>
<dbReference type="SMR" id="A2QBF0"/>
<dbReference type="EnsemblFungi" id="CAK37455">
    <property type="protein sequence ID" value="CAK37455"/>
    <property type="gene ID" value="An01g15010"/>
</dbReference>
<dbReference type="VEuPathDB" id="FungiDB:An01g15010"/>
<dbReference type="HOGENOM" id="CLU_005533_1_4_1"/>
<dbReference type="OrthoDB" id="44156at5052"/>
<dbReference type="Proteomes" id="UP000006706">
    <property type="component" value="Chromosome 2R"/>
</dbReference>
<dbReference type="GO" id="GO:0008171">
    <property type="term" value="F:O-methyltransferase activity"/>
    <property type="evidence" value="ECO:0007669"/>
    <property type="project" value="InterPro"/>
</dbReference>
<dbReference type="GO" id="GO:0032259">
    <property type="term" value="P:methylation"/>
    <property type="evidence" value="ECO:0007669"/>
    <property type="project" value="UniProtKB-KW"/>
</dbReference>
<dbReference type="GO" id="GO:0044550">
    <property type="term" value="P:secondary metabolite biosynthetic process"/>
    <property type="evidence" value="ECO:0007669"/>
    <property type="project" value="UniProtKB-ARBA"/>
</dbReference>
<dbReference type="Gene3D" id="3.40.50.150">
    <property type="entry name" value="Vaccinia Virus protein VP39"/>
    <property type="match status" value="1"/>
</dbReference>
<dbReference type="Gene3D" id="1.10.10.10">
    <property type="entry name" value="Winged helix-like DNA-binding domain superfamily/Winged helix DNA-binding domain"/>
    <property type="match status" value="1"/>
</dbReference>
<dbReference type="InterPro" id="IPR016461">
    <property type="entry name" value="COMT-like"/>
</dbReference>
<dbReference type="InterPro" id="IPR001077">
    <property type="entry name" value="O_MeTrfase_dom"/>
</dbReference>
<dbReference type="InterPro" id="IPR029063">
    <property type="entry name" value="SAM-dependent_MTases_sf"/>
</dbReference>
<dbReference type="InterPro" id="IPR036388">
    <property type="entry name" value="WH-like_DNA-bd_sf"/>
</dbReference>
<dbReference type="InterPro" id="IPR036390">
    <property type="entry name" value="WH_DNA-bd_sf"/>
</dbReference>
<dbReference type="PANTHER" id="PTHR43712:SF15">
    <property type="entry name" value="MONODICTYPHENONE CLUSTER TRANSCRIPTIONAL COACTIVATOR MDPA"/>
    <property type="match status" value="1"/>
</dbReference>
<dbReference type="PANTHER" id="PTHR43712">
    <property type="entry name" value="PUTATIVE (AFU_ORTHOLOGUE AFUA_4G14580)-RELATED"/>
    <property type="match status" value="1"/>
</dbReference>
<dbReference type="Pfam" id="PF00891">
    <property type="entry name" value="Methyltransf_2"/>
    <property type="match status" value="1"/>
</dbReference>
<dbReference type="SUPFAM" id="SSF53335">
    <property type="entry name" value="S-adenosyl-L-methionine-dependent methyltransferases"/>
    <property type="match status" value="1"/>
</dbReference>
<dbReference type="SUPFAM" id="SSF46785">
    <property type="entry name" value="Winged helix' DNA-binding domain"/>
    <property type="match status" value="1"/>
</dbReference>
<dbReference type="PROSITE" id="PS51683">
    <property type="entry name" value="SAM_OMT_II"/>
    <property type="match status" value="1"/>
</dbReference>
<protein>
    <recommendedName>
        <fullName evidence="3">O-methyltransferase aunD</fullName>
        <ecNumber evidence="5">2.1.1.-</ecNumber>
    </recommendedName>
    <alternativeName>
        <fullName evidence="3">Aurasperone B biosynthesis cluster protein D</fullName>
    </alternativeName>
</protein>
<name>AUND_ASPNC</name>
<evidence type="ECO:0000255" key="1">
    <source>
        <dbReference type="PROSITE-ProRule" id="PRU01020"/>
    </source>
</evidence>
<evidence type="ECO:0000269" key="2">
    <source>
    </source>
</evidence>
<evidence type="ECO:0000303" key="3">
    <source>
    </source>
</evidence>
<evidence type="ECO:0000305" key="4"/>
<evidence type="ECO:0000305" key="5">
    <source>
    </source>
</evidence>
<proteinExistence type="inferred from homology"/>
<organism>
    <name type="scientific">Aspergillus niger (strain ATCC MYA-4892 / CBS 513.88 / FGSC A1513)</name>
    <dbReference type="NCBI Taxonomy" id="425011"/>
    <lineage>
        <taxon>Eukaryota</taxon>
        <taxon>Fungi</taxon>
        <taxon>Dikarya</taxon>
        <taxon>Ascomycota</taxon>
        <taxon>Pezizomycotina</taxon>
        <taxon>Eurotiomycetes</taxon>
        <taxon>Eurotiomycetidae</taxon>
        <taxon>Eurotiales</taxon>
        <taxon>Aspergillaceae</taxon>
        <taxon>Aspergillus</taxon>
        <taxon>Aspergillus subgen. Circumdati</taxon>
    </lineage>
</organism>
<comment type="function">
    <text evidence="2 5">O-methyltransferase; part of the gene cluster that mediates the biosynthesis of aurasperone B, a dimeric gamma-naphthopyrone (PubMed:31067027). The first step in the biosynthesis of aurasperone B is the production of gamma-naphthopyrone precursor YWA1 by the non-reducing polyketide synthase albA, via condensation of one acetyl-CoA starter unit with 6 malonyl-CoA units (PubMed:31067027). YWA1 is then methylated by aunE at position C-6 to yield foncesin which is further methylated at position C-8 by aunD to produce fonsecin B (Probable). A key enzyme in the biosynthetic pathway is the cytochrome P450 monooxygenase aunB which catalyzes the oxidative dimerization of fonsecin B to aurasperone B (PubMed:31067027). AunB also catalyzes the oxidative dimerization of rubrofusarin B into aurasperone A (PubMed:31067027).</text>
</comment>
<comment type="pathway">
    <text evidence="5">Secondary metabolite biosynthesis.</text>
</comment>
<comment type="disruption phenotype">
    <text evidence="2">Leads to the accumulatio of aurasperone B and fonsecin B.</text>
</comment>
<comment type="similarity">
    <text evidence="1">Belongs to the class I-like SAM-binding methyltransferase superfamily. Cation-independent O-methyltransferase family.</text>
</comment>
<comment type="sequence caution" evidence="4">
    <conflict type="erroneous gene model prediction">
        <sequence resource="EMBL-CDS" id="CAK37455"/>
    </conflict>
</comment>
<feature type="chain" id="PRO_0000449890" description="O-methyltransferase aunD">
    <location>
        <begin position="1"/>
        <end position="424"/>
    </location>
</feature>
<feature type="active site" description="Proton acceptor" evidence="1">
    <location>
        <position position="326"/>
    </location>
</feature>
<feature type="binding site" evidence="1">
    <location>
        <position position="275"/>
    </location>
    <ligand>
        <name>S-adenosyl-L-methionine</name>
        <dbReference type="ChEBI" id="CHEBI:59789"/>
    </ligand>
</feature>
<accession>A2QBF0</accession>
<sequence length="424" mass="46741">MDDRLSSQLEHYASQVTASATLIIRHLKSLKDEPSTLPSQTSVPTAVGTAQLRLAEAAFQLLHFTRDPGNVLTQLTVDLQVISAVRWLLHFEIFSLVPLEGSISYHELSSVANVPENLLRSHIRLAMTCHLFQESGPIGMVAHSPVSRQLASDPSLVSWGQYFANSVFPTATKNVNATAAWPGSKALNETAHNLAFNHHGSFFDYVSQDPARTVEFANSMKAVSTTSLFDTCHLCKSFDWSSLGDGVVVDMGGSTGHVSIALAESFPSLRFVVQDLPDVVSNSIRQLEERQLPLSVTTRIQFQGHSLLHMQPVKGAAVYLLRQILHDWPDREAVQILRSIVPALGPSSKIFIADIVLPEAGSIPATEEQVMRCNDLLLHQFTNTLERTLEDWQAIVSRVSDNLRIQHVYRDPGSILSLLVIETV</sequence>
<keyword id="KW-0489">Methyltransferase</keyword>
<keyword id="KW-1185">Reference proteome</keyword>
<keyword id="KW-0949">S-adenosyl-L-methionine</keyword>
<keyword id="KW-0808">Transferase</keyword>